<keyword id="KW-0456">Lyase</keyword>
<protein>
    <recommendedName>
        <fullName>Coronafacic acid dehydratase</fullName>
        <shortName>CFA-dehydratase</shortName>
        <ecNumber>4.2.1.-</ecNumber>
    </recommendedName>
</protein>
<evidence type="ECO:0000250" key="1"/>
<evidence type="ECO:0000305" key="2"/>
<accession>P72238</accession>
<reference key="1">
    <citation type="journal article" date="1996" name="Gene">
        <title>Characterisation of genes involved in biosynthesis of coronafacic acid, the polyketide component of the phytotoxin coronatine.</title>
        <authorList>
            <person name="Penfold C.N."/>
            <person name="Bender C.L."/>
            <person name="Turner J.G."/>
        </authorList>
    </citation>
    <scope>NUCLEOTIDE SEQUENCE [GENOMIC DNA]</scope>
</reference>
<comment type="pathway">
    <text>Phytotoxin biosynthesis; coronatine biosynthesis.</text>
</comment>
<comment type="similarity">
    <text evidence="2">Belongs to the thioester dehydratase family.</text>
</comment>
<proteinExistence type="inferred from homology"/>
<name>CFA2_PSESG</name>
<feature type="chain" id="PRO_0000091771" description="Coronafacic acid dehydratase">
    <location>
        <begin position="1"/>
        <end position="165"/>
    </location>
</feature>
<feature type="active site" evidence="1">
    <location>
        <position position="62"/>
    </location>
</feature>
<gene>
    <name type="primary">cfa2</name>
</gene>
<dbReference type="EC" id="4.2.1.-"/>
<dbReference type="EMBL" id="U56980">
    <property type="protein sequence ID" value="AAB41299.1"/>
    <property type="molecule type" value="Genomic_DNA"/>
</dbReference>
<dbReference type="PIR" id="JC5746">
    <property type="entry name" value="JC5746"/>
</dbReference>
<dbReference type="RefSeq" id="WP_004666806.1">
    <property type="nucleotide sequence ID" value="NZ_RBVH01000692.1"/>
</dbReference>
<dbReference type="SMR" id="P72238"/>
<dbReference type="UniPathway" id="UPA00727"/>
<dbReference type="GO" id="GO:0016829">
    <property type="term" value="F:lyase activity"/>
    <property type="evidence" value="ECO:0007669"/>
    <property type="project" value="UniProtKB-KW"/>
</dbReference>
<dbReference type="Gene3D" id="3.10.129.10">
    <property type="entry name" value="Hotdog Thioesterase"/>
    <property type="match status" value="1"/>
</dbReference>
<dbReference type="InterPro" id="IPR013114">
    <property type="entry name" value="FabA_FabZ"/>
</dbReference>
<dbReference type="InterPro" id="IPR029069">
    <property type="entry name" value="HotDog_dom_sf"/>
</dbReference>
<dbReference type="PANTHER" id="PTHR30272">
    <property type="entry name" value="3-HYDROXYACYL-[ACYL-CARRIER-PROTEIN] DEHYDRATASE"/>
    <property type="match status" value="1"/>
</dbReference>
<dbReference type="PANTHER" id="PTHR30272:SF1">
    <property type="entry name" value="3-HYDROXYACYL-[ACYL-CARRIER-PROTEIN] DEHYDRATASE"/>
    <property type="match status" value="1"/>
</dbReference>
<dbReference type="Pfam" id="PF07977">
    <property type="entry name" value="FabA"/>
    <property type="match status" value="1"/>
</dbReference>
<dbReference type="SUPFAM" id="SSF54637">
    <property type="entry name" value="Thioesterase/thiol ester dehydrase-isomerase"/>
    <property type="match status" value="1"/>
</dbReference>
<organism>
    <name type="scientific">Pseudomonas savastanoi pv. glycinea</name>
    <name type="common">Pseudomonas syringae pv. glycinea</name>
    <dbReference type="NCBI Taxonomy" id="318"/>
    <lineage>
        <taxon>Bacteria</taxon>
        <taxon>Pseudomonadati</taxon>
        <taxon>Pseudomonadota</taxon>
        <taxon>Gammaproteobacteria</taxon>
        <taxon>Pseudomonadales</taxon>
        <taxon>Pseudomonadaceae</taxon>
        <taxon>Pseudomonas</taxon>
    </lineage>
</organism>
<sequence length="165" mass="18461">MSLPESDKQPRAQRTMGFTELKTWLRHRHPMVYLDRVLDYEPGVQIKTLMAVSGQTDALAGHFPERAIYPASHLMQAISQSAIILFQLSTSRLAGDEVTLVGSIKSRFTRPVVPGDLVIFQLDCESLRPDFFTFSCRATVDGRSVGMLKGSLVRKSLADLGEHLW</sequence>